<comment type="function">
    <text evidence="4">Specifically required during spermatogenesis for flagellum morphogenesis and sperm motility (PubMed:27965440). May be required to suppress the formation of supernumerary axonemes and ensure a correct ultrastructure (PubMed:27965440).</text>
</comment>
<comment type="subunit">
    <text evidence="4">Interacts with TUBB and TUBA4A (PubMed:27965440). Interacts with CEP350 (PubMed:27965440).</text>
</comment>
<comment type="subcellular location">
    <subcellularLocation>
        <location evidence="4">Cytoplasm</location>
        <location evidence="4">Cytoskeleton</location>
        <location evidence="4">Cilium basal body</location>
    </subcellularLocation>
</comment>
<comment type="tissue specificity">
    <text evidence="4">Specifically expressed in tissues containing motile cilia.</text>
</comment>
<comment type="induction">
    <text evidence="4">Expression is activated by FOXJ1.</text>
</comment>
<comment type="disruption phenotype">
    <text evidence="4">Mice were born at expected Mendelian ratios and appear normal but homozygous males are infertile. Spermatozoa display impaired motility due to defects in the axoneme. Sperm cells show an axonemal loop of the midpiece, supernumerary axonemes and a disrupted axonemal arrangement, as well as defective axonemes along the flagella.</text>
</comment>
<comment type="similarity">
    <text evidence="5">Belongs to the CFAP157 family.</text>
</comment>
<comment type="sequence caution" evidence="5">
    <conflict type="frameshift">
        <sequence resource="EMBL-CDS" id="BAB24421"/>
    </conflict>
</comment>
<accession>Q0VFX2</accession>
<accession>Q9DA63</accession>
<evidence type="ECO:0000250" key="1">
    <source>
        <dbReference type="UniProtKB" id="Q4V7B0"/>
    </source>
</evidence>
<evidence type="ECO:0000255" key="2"/>
<evidence type="ECO:0000256" key="3">
    <source>
        <dbReference type="SAM" id="MobiDB-lite"/>
    </source>
</evidence>
<evidence type="ECO:0000269" key="4">
    <source>
    </source>
</evidence>
<evidence type="ECO:0000305" key="5"/>
<evidence type="ECO:0000312" key="6">
    <source>
        <dbReference type="MGI" id="MGI:2447809"/>
    </source>
</evidence>
<proteinExistence type="evidence at protein level"/>
<organism>
    <name type="scientific">Mus musculus</name>
    <name type="common">Mouse</name>
    <dbReference type="NCBI Taxonomy" id="10090"/>
    <lineage>
        <taxon>Eukaryota</taxon>
        <taxon>Metazoa</taxon>
        <taxon>Chordata</taxon>
        <taxon>Craniata</taxon>
        <taxon>Vertebrata</taxon>
        <taxon>Euteleostomi</taxon>
        <taxon>Mammalia</taxon>
        <taxon>Eutheria</taxon>
        <taxon>Euarchontoglires</taxon>
        <taxon>Glires</taxon>
        <taxon>Rodentia</taxon>
        <taxon>Myomorpha</taxon>
        <taxon>Muroidea</taxon>
        <taxon>Muridae</taxon>
        <taxon>Murinae</taxon>
        <taxon>Mus</taxon>
        <taxon>Mus</taxon>
    </lineage>
</organism>
<protein>
    <recommendedName>
        <fullName evidence="5">Cilia- and flagella-associated protein 157</fullName>
    </recommendedName>
</protein>
<name>CF157_MOUSE</name>
<gene>
    <name evidence="6" type="primary">Cfap157</name>
</gene>
<dbReference type="EMBL" id="AK006127">
    <property type="protein sequence ID" value="BAB24421.1"/>
    <property type="status" value="ALT_FRAME"/>
    <property type="molecule type" value="mRNA"/>
</dbReference>
<dbReference type="EMBL" id="AL772271">
    <property type="status" value="NOT_ANNOTATED_CDS"/>
    <property type="molecule type" value="Genomic_DNA"/>
</dbReference>
<dbReference type="EMBL" id="BC118617">
    <property type="protein sequence ID" value="AAI18618.1"/>
    <property type="molecule type" value="mRNA"/>
</dbReference>
<dbReference type="EMBL" id="BC121825">
    <property type="protein sequence ID" value="AAI21826.1"/>
    <property type="molecule type" value="mRNA"/>
</dbReference>
<dbReference type="CCDS" id="CCDS15932.1"/>
<dbReference type="RefSeq" id="NP_079895.1">
    <property type="nucleotide sequence ID" value="NM_025619.1"/>
</dbReference>
<dbReference type="SMR" id="Q0VFX2"/>
<dbReference type="FunCoup" id="Q0VFX2">
    <property type="interactions" value="144"/>
</dbReference>
<dbReference type="STRING" id="10090.ENSMUSP00000099877"/>
<dbReference type="PhosphoSitePlus" id="Q0VFX2"/>
<dbReference type="PaxDb" id="10090-ENSMUSP00000099877"/>
<dbReference type="PeptideAtlas" id="Q0VFX2"/>
<dbReference type="ProteomicsDB" id="283889"/>
<dbReference type="Pumba" id="Q0VFX2"/>
<dbReference type="Antibodypedia" id="7779">
    <property type="antibodies" value="91 antibodies from 18 providers"/>
</dbReference>
<dbReference type="Ensembl" id="ENSMUST00000102813.2">
    <property type="protein sequence ID" value="ENSMUSP00000099877.2"/>
    <property type="gene ID" value="ENSMUSG00000038987.9"/>
</dbReference>
<dbReference type="GeneID" id="227736"/>
<dbReference type="KEGG" id="mmu:227736"/>
<dbReference type="UCSC" id="uc008jgz.1">
    <property type="organism name" value="mouse"/>
</dbReference>
<dbReference type="AGR" id="MGI:2447809"/>
<dbReference type="CTD" id="286207"/>
<dbReference type="MGI" id="MGI:2447809">
    <property type="gene designation" value="Cfap157"/>
</dbReference>
<dbReference type="VEuPathDB" id="HostDB:ENSMUSG00000038987"/>
<dbReference type="eggNOG" id="ENOG502QQK8">
    <property type="taxonomic scope" value="Eukaryota"/>
</dbReference>
<dbReference type="GeneTree" id="ENSGT00730000111240"/>
<dbReference type="HOGENOM" id="CLU_025198_2_0_1"/>
<dbReference type="InParanoid" id="Q0VFX2"/>
<dbReference type="OMA" id="KIKSLCR"/>
<dbReference type="OrthoDB" id="166611at2759"/>
<dbReference type="PhylomeDB" id="Q0VFX2"/>
<dbReference type="TreeFam" id="TF329637"/>
<dbReference type="BioGRID-ORCS" id="227736">
    <property type="hits" value="1 hit in 46 CRISPR screens"/>
</dbReference>
<dbReference type="ChiTaRS" id="Cfap157">
    <property type="organism name" value="mouse"/>
</dbReference>
<dbReference type="PRO" id="PR:Q0VFX2"/>
<dbReference type="Proteomes" id="UP000000589">
    <property type="component" value="Chromosome 2"/>
</dbReference>
<dbReference type="RNAct" id="Q0VFX2">
    <property type="molecule type" value="protein"/>
</dbReference>
<dbReference type="Bgee" id="ENSMUSG00000038987">
    <property type="expression patterns" value="Expressed in spermatid and 59 other cell types or tissues"/>
</dbReference>
<dbReference type="GO" id="GO:0036064">
    <property type="term" value="C:ciliary basal body"/>
    <property type="evidence" value="ECO:0000314"/>
    <property type="project" value="UniProtKB"/>
</dbReference>
<dbReference type="GO" id="GO:0005737">
    <property type="term" value="C:cytoplasm"/>
    <property type="evidence" value="ECO:0007669"/>
    <property type="project" value="UniProtKB-KW"/>
</dbReference>
<dbReference type="GO" id="GO:0008017">
    <property type="term" value="F:microtubule binding"/>
    <property type="evidence" value="ECO:0000314"/>
    <property type="project" value="UniProtKB"/>
</dbReference>
<dbReference type="GO" id="GO:0007288">
    <property type="term" value="P:sperm axoneme assembly"/>
    <property type="evidence" value="ECO:0000315"/>
    <property type="project" value="UniProtKB"/>
</dbReference>
<dbReference type="InterPro" id="IPR038844">
    <property type="entry name" value="CFAP157"/>
</dbReference>
<dbReference type="PANTHER" id="PTHR31954">
    <property type="entry name" value="CILIA- AND FLAGELLA-ASSOCIATED PROTEIN 157"/>
    <property type="match status" value="1"/>
</dbReference>
<dbReference type="PANTHER" id="PTHR31954:SF1">
    <property type="entry name" value="CILIA- AND FLAGELLA-ASSOCIATED PROTEIN 157"/>
    <property type="match status" value="1"/>
</dbReference>
<feature type="chain" id="PRO_0000307225" description="Cilia- and flagella-associated protein 157">
    <location>
        <begin position="1"/>
        <end position="523"/>
    </location>
</feature>
<feature type="region of interest" description="Disordered" evidence="3">
    <location>
        <begin position="1"/>
        <end position="31"/>
    </location>
</feature>
<feature type="region of interest" description="Disordered" evidence="3">
    <location>
        <begin position="419"/>
        <end position="440"/>
    </location>
</feature>
<feature type="coiled-coil region" evidence="2">
    <location>
        <begin position="32"/>
        <end position="191"/>
    </location>
</feature>
<feature type="coiled-coil region" evidence="2">
    <location>
        <begin position="248"/>
        <end position="274"/>
    </location>
</feature>
<feature type="coiled-coil region" evidence="2">
    <location>
        <begin position="302"/>
        <end position="371"/>
    </location>
</feature>
<feature type="compositionally biased region" description="Basic and acidic residues" evidence="3">
    <location>
        <begin position="10"/>
        <end position="26"/>
    </location>
</feature>
<feature type="compositionally biased region" description="Polar residues" evidence="3">
    <location>
        <begin position="429"/>
        <end position="440"/>
    </location>
</feature>
<feature type="modified residue" description="Phosphothreonine" evidence="1">
    <location>
        <position position="30"/>
    </location>
</feature>
<feature type="sequence conflict" description="In Ref. 1; BAB24421." evidence="5" ref="1">
    <original>E</original>
    <variation>D</variation>
    <location>
        <position position="224"/>
    </location>
</feature>
<reference key="1">
    <citation type="journal article" date="2005" name="Science">
        <title>The transcriptional landscape of the mammalian genome.</title>
        <authorList>
            <person name="Carninci P."/>
            <person name="Kasukawa T."/>
            <person name="Katayama S."/>
            <person name="Gough J."/>
            <person name="Frith M.C."/>
            <person name="Maeda N."/>
            <person name="Oyama R."/>
            <person name="Ravasi T."/>
            <person name="Lenhard B."/>
            <person name="Wells C."/>
            <person name="Kodzius R."/>
            <person name="Shimokawa K."/>
            <person name="Bajic V.B."/>
            <person name="Brenner S.E."/>
            <person name="Batalov S."/>
            <person name="Forrest A.R."/>
            <person name="Zavolan M."/>
            <person name="Davis M.J."/>
            <person name="Wilming L.G."/>
            <person name="Aidinis V."/>
            <person name="Allen J.E."/>
            <person name="Ambesi-Impiombato A."/>
            <person name="Apweiler R."/>
            <person name="Aturaliya R.N."/>
            <person name="Bailey T.L."/>
            <person name="Bansal M."/>
            <person name="Baxter L."/>
            <person name="Beisel K.W."/>
            <person name="Bersano T."/>
            <person name="Bono H."/>
            <person name="Chalk A.M."/>
            <person name="Chiu K.P."/>
            <person name="Choudhary V."/>
            <person name="Christoffels A."/>
            <person name="Clutterbuck D.R."/>
            <person name="Crowe M.L."/>
            <person name="Dalla E."/>
            <person name="Dalrymple B.P."/>
            <person name="de Bono B."/>
            <person name="Della Gatta G."/>
            <person name="di Bernardo D."/>
            <person name="Down T."/>
            <person name="Engstrom P."/>
            <person name="Fagiolini M."/>
            <person name="Faulkner G."/>
            <person name="Fletcher C.F."/>
            <person name="Fukushima T."/>
            <person name="Furuno M."/>
            <person name="Futaki S."/>
            <person name="Gariboldi M."/>
            <person name="Georgii-Hemming P."/>
            <person name="Gingeras T.R."/>
            <person name="Gojobori T."/>
            <person name="Green R.E."/>
            <person name="Gustincich S."/>
            <person name="Harbers M."/>
            <person name="Hayashi Y."/>
            <person name="Hensch T.K."/>
            <person name="Hirokawa N."/>
            <person name="Hill D."/>
            <person name="Huminiecki L."/>
            <person name="Iacono M."/>
            <person name="Ikeo K."/>
            <person name="Iwama A."/>
            <person name="Ishikawa T."/>
            <person name="Jakt M."/>
            <person name="Kanapin A."/>
            <person name="Katoh M."/>
            <person name="Kawasawa Y."/>
            <person name="Kelso J."/>
            <person name="Kitamura H."/>
            <person name="Kitano H."/>
            <person name="Kollias G."/>
            <person name="Krishnan S.P."/>
            <person name="Kruger A."/>
            <person name="Kummerfeld S.K."/>
            <person name="Kurochkin I.V."/>
            <person name="Lareau L.F."/>
            <person name="Lazarevic D."/>
            <person name="Lipovich L."/>
            <person name="Liu J."/>
            <person name="Liuni S."/>
            <person name="McWilliam S."/>
            <person name="Madan Babu M."/>
            <person name="Madera M."/>
            <person name="Marchionni L."/>
            <person name="Matsuda H."/>
            <person name="Matsuzawa S."/>
            <person name="Miki H."/>
            <person name="Mignone F."/>
            <person name="Miyake S."/>
            <person name="Morris K."/>
            <person name="Mottagui-Tabar S."/>
            <person name="Mulder N."/>
            <person name="Nakano N."/>
            <person name="Nakauchi H."/>
            <person name="Ng P."/>
            <person name="Nilsson R."/>
            <person name="Nishiguchi S."/>
            <person name="Nishikawa S."/>
            <person name="Nori F."/>
            <person name="Ohara O."/>
            <person name="Okazaki Y."/>
            <person name="Orlando V."/>
            <person name="Pang K.C."/>
            <person name="Pavan W.J."/>
            <person name="Pavesi G."/>
            <person name="Pesole G."/>
            <person name="Petrovsky N."/>
            <person name="Piazza S."/>
            <person name="Reed J."/>
            <person name="Reid J.F."/>
            <person name="Ring B.Z."/>
            <person name="Ringwald M."/>
            <person name="Rost B."/>
            <person name="Ruan Y."/>
            <person name="Salzberg S.L."/>
            <person name="Sandelin A."/>
            <person name="Schneider C."/>
            <person name="Schoenbach C."/>
            <person name="Sekiguchi K."/>
            <person name="Semple C.A."/>
            <person name="Seno S."/>
            <person name="Sessa L."/>
            <person name="Sheng Y."/>
            <person name="Shibata Y."/>
            <person name="Shimada H."/>
            <person name="Shimada K."/>
            <person name="Silva D."/>
            <person name="Sinclair B."/>
            <person name="Sperling S."/>
            <person name="Stupka E."/>
            <person name="Sugiura K."/>
            <person name="Sultana R."/>
            <person name="Takenaka Y."/>
            <person name="Taki K."/>
            <person name="Tammoja K."/>
            <person name="Tan S.L."/>
            <person name="Tang S."/>
            <person name="Taylor M.S."/>
            <person name="Tegner J."/>
            <person name="Teichmann S.A."/>
            <person name="Ueda H.R."/>
            <person name="van Nimwegen E."/>
            <person name="Verardo R."/>
            <person name="Wei C.L."/>
            <person name="Yagi K."/>
            <person name="Yamanishi H."/>
            <person name="Zabarovsky E."/>
            <person name="Zhu S."/>
            <person name="Zimmer A."/>
            <person name="Hide W."/>
            <person name="Bult C."/>
            <person name="Grimmond S.M."/>
            <person name="Teasdale R.D."/>
            <person name="Liu E.T."/>
            <person name="Brusic V."/>
            <person name="Quackenbush J."/>
            <person name="Wahlestedt C."/>
            <person name="Mattick J.S."/>
            <person name="Hume D.A."/>
            <person name="Kai C."/>
            <person name="Sasaki D."/>
            <person name="Tomaru Y."/>
            <person name="Fukuda S."/>
            <person name="Kanamori-Katayama M."/>
            <person name="Suzuki M."/>
            <person name="Aoki J."/>
            <person name="Arakawa T."/>
            <person name="Iida J."/>
            <person name="Imamura K."/>
            <person name="Itoh M."/>
            <person name="Kato T."/>
            <person name="Kawaji H."/>
            <person name="Kawagashira N."/>
            <person name="Kawashima T."/>
            <person name="Kojima M."/>
            <person name="Kondo S."/>
            <person name="Konno H."/>
            <person name="Nakano K."/>
            <person name="Ninomiya N."/>
            <person name="Nishio T."/>
            <person name="Okada M."/>
            <person name="Plessy C."/>
            <person name="Shibata K."/>
            <person name="Shiraki T."/>
            <person name="Suzuki S."/>
            <person name="Tagami M."/>
            <person name="Waki K."/>
            <person name="Watahiki A."/>
            <person name="Okamura-Oho Y."/>
            <person name="Suzuki H."/>
            <person name="Kawai J."/>
            <person name="Hayashizaki Y."/>
        </authorList>
    </citation>
    <scope>NUCLEOTIDE SEQUENCE [LARGE SCALE MRNA]</scope>
    <source>
        <strain>C57BL/6J</strain>
        <tissue>Testis</tissue>
    </source>
</reference>
<reference key="2">
    <citation type="journal article" date="2009" name="PLoS Biol.">
        <title>Lineage-specific biology revealed by a finished genome assembly of the mouse.</title>
        <authorList>
            <person name="Church D.M."/>
            <person name="Goodstadt L."/>
            <person name="Hillier L.W."/>
            <person name="Zody M.C."/>
            <person name="Goldstein S."/>
            <person name="She X."/>
            <person name="Bult C.J."/>
            <person name="Agarwala R."/>
            <person name="Cherry J.L."/>
            <person name="DiCuccio M."/>
            <person name="Hlavina W."/>
            <person name="Kapustin Y."/>
            <person name="Meric P."/>
            <person name="Maglott D."/>
            <person name="Birtle Z."/>
            <person name="Marques A.C."/>
            <person name="Graves T."/>
            <person name="Zhou S."/>
            <person name="Teague B."/>
            <person name="Potamousis K."/>
            <person name="Churas C."/>
            <person name="Place M."/>
            <person name="Herschleb J."/>
            <person name="Runnheim R."/>
            <person name="Forrest D."/>
            <person name="Amos-Landgraf J."/>
            <person name="Schwartz D.C."/>
            <person name="Cheng Z."/>
            <person name="Lindblad-Toh K."/>
            <person name="Eichler E.E."/>
            <person name="Ponting C.P."/>
        </authorList>
    </citation>
    <scope>NUCLEOTIDE SEQUENCE [LARGE SCALE GENOMIC DNA]</scope>
    <source>
        <strain>C57BL/6J</strain>
    </source>
</reference>
<reference key="3">
    <citation type="journal article" date="2004" name="Genome Res.">
        <title>The status, quality, and expansion of the NIH full-length cDNA project: the Mammalian Gene Collection (MGC).</title>
        <authorList>
            <consortium name="The MGC Project Team"/>
        </authorList>
    </citation>
    <scope>NUCLEOTIDE SEQUENCE [LARGE SCALE MRNA]</scope>
</reference>
<reference key="4">
    <citation type="journal article" date="2016" name="Development">
        <title>CFAP157 is a murine downstream effector of FOXJ1 that is specifically required for flagellum morphogenesis and sperm motility.</title>
        <authorList>
            <person name="Weidemann M."/>
            <person name="Schuster-Gossler K."/>
            <person name="Stauber M."/>
            <person name="Wrede C."/>
            <person name="Hegermann J."/>
            <person name="Ott T."/>
            <person name="Boldt K."/>
            <person name="Beyer T."/>
            <person name="Serth K."/>
            <person name="Kremmer E."/>
            <person name="Blum M."/>
            <person name="Ueffing M."/>
            <person name="Gossler A."/>
        </authorList>
    </citation>
    <scope>FUNCTION</scope>
    <scope>SUBCELLULAR LOCATION</scope>
    <scope>TISSUE SPECIFICITY</scope>
    <scope>INDUCTION</scope>
    <scope>DISRUPTION PHENOTYPE</scope>
    <scope>INTERACTION WITH TUBB; TUBA4A AND CEP350</scope>
</reference>
<keyword id="KW-0966">Cell projection</keyword>
<keyword id="KW-0969">Cilium</keyword>
<keyword id="KW-0175">Coiled coil</keyword>
<keyword id="KW-0963">Cytoplasm</keyword>
<keyword id="KW-0206">Cytoskeleton</keyword>
<keyword id="KW-0221">Differentiation</keyword>
<keyword id="KW-0597">Phosphoprotein</keyword>
<keyword id="KW-1185">Reference proteome</keyword>
<keyword id="KW-0744">Spermatogenesis</keyword>
<sequence>MAPKKKPNKGGKEMQGKKIGGKKDASGTKTPELAMVEELKEFYHKQIQDLEDRLARYQRKWDELAVREKLFHQEFEQLANNKKEIVAFLKRTLNQKVDEITDLNDQLQSLEVAKDMEKDAFEAQLAQVRHEFQEIKDQLTTENIALGIKLSSLEEFRLQKEELTEKYLALEEQLHRQEGEYKEYVYNLEKKSVLDKDRLRKEIIQRVNLVATEFRKMATNQMWETTRRAILENNSVTLQLNKVSKHGVQLLQENEQLKGTQNKLCQQLEMLENTQEIMARKNIGHKKIILMLTEKCRQQRKGTEETEQLRLLLSQLEQNFQNVQRDNQTLRSEKDQLEAQLKEKQAEANRLQEELTKEQKIRANLKTVLIQATSMLQDIVHMQTEAEDGDFDVVFQLQRKELLQQLLVLLSSGVVLKTQPDMGSHQDKQPQGLSKESQRITQTSKEGAVSLLQQLSTITTYKPGDLGLVPRRPVRIPLKPQDLRPLSYITRMGICQNTNEIYPSGALKRFRKFTLPRPFLHRK</sequence>